<comment type="function">
    <text evidence="1">Catalyzes the transfer of succinyl-CoA to arginine to produce N(2)-succinylarginine.</text>
</comment>
<comment type="catalytic activity">
    <reaction evidence="1">
        <text>succinyl-CoA + L-arginine = N(2)-succinyl-L-arginine + CoA + H(+)</text>
        <dbReference type="Rhea" id="RHEA:15185"/>
        <dbReference type="ChEBI" id="CHEBI:15378"/>
        <dbReference type="ChEBI" id="CHEBI:32682"/>
        <dbReference type="ChEBI" id="CHEBI:57287"/>
        <dbReference type="ChEBI" id="CHEBI:57292"/>
        <dbReference type="ChEBI" id="CHEBI:58241"/>
        <dbReference type="EC" id="2.3.1.109"/>
    </reaction>
</comment>
<comment type="pathway">
    <text evidence="1">Amino-acid degradation; L-arginine degradation via AST pathway; L-glutamate and succinate from L-arginine: step 1/5.</text>
</comment>
<comment type="similarity">
    <text evidence="1">Belongs to the arginine N-succinyltransferase family.</text>
</comment>
<accession>B7MAV8</accession>
<gene>
    <name evidence="1" type="primary">astA</name>
    <name type="ordered locus">ECS88_1799</name>
</gene>
<feature type="chain" id="PRO_1000137975" description="Arginine N-succinyltransferase">
    <location>
        <begin position="1"/>
        <end position="344"/>
    </location>
</feature>
<feature type="active site" description="Proton donor" evidence="1">
    <location>
        <position position="229"/>
    </location>
</feature>
<feature type="binding site" evidence="1">
    <location>
        <position position="125"/>
    </location>
    <ligand>
        <name>succinyl-CoA</name>
        <dbReference type="ChEBI" id="CHEBI:57292"/>
    </ligand>
</feature>
<sequence length="344" mass="38551">MMVIRPVERSDVSALMQLASKTGGGLTSLPANEATLSVRIERAIKTWQGELPKSEQGYVFVLEDSETGTVAGICAIEVAVGLNDPWYNYRVGTLVHASKELNVYNALPTLFLSNDHTGSSELCTLFLDPKWRKEGNGYLLSKSRFMFMAAFRDKFNDKVVAEMRGVIDEHGYSPFWQSLGKRFFSMDFSRADFLCGTGQKAFIAELMPKHPIYTYFLSQEAQDVIGQVHPQTAPARAVLEKEGFRYRNYIDIFDGGPTLECDIDRVRAIRKSRLVEVAEGQPAQGDFPACLVANENYHHFRVVLVRTDPATERLILTAAQLDVLKCHAGDRVRLVRLCAEEKTA</sequence>
<organism>
    <name type="scientific">Escherichia coli O45:K1 (strain S88 / ExPEC)</name>
    <dbReference type="NCBI Taxonomy" id="585035"/>
    <lineage>
        <taxon>Bacteria</taxon>
        <taxon>Pseudomonadati</taxon>
        <taxon>Pseudomonadota</taxon>
        <taxon>Gammaproteobacteria</taxon>
        <taxon>Enterobacterales</taxon>
        <taxon>Enterobacteriaceae</taxon>
        <taxon>Escherichia</taxon>
    </lineage>
</organism>
<proteinExistence type="inferred from homology"/>
<protein>
    <recommendedName>
        <fullName evidence="1">Arginine N-succinyltransferase</fullName>
        <shortName evidence="1">AST</shortName>
        <ecNumber evidence="1">2.3.1.109</ecNumber>
    </recommendedName>
    <alternativeName>
        <fullName evidence="1">AOST</fullName>
    </alternativeName>
</protein>
<evidence type="ECO:0000255" key="1">
    <source>
        <dbReference type="HAMAP-Rule" id="MF_01171"/>
    </source>
</evidence>
<name>ASTA_ECO45</name>
<dbReference type="EC" id="2.3.1.109" evidence="1"/>
<dbReference type="EMBL" id="CU928161">
    <property type="protein sequence ID" value="CAR03107.1"/>
    <property type="molecule type" value="Genomic_DNA"/>
</dbReference>
<dbReference type="RefSeq" id="WP_000989442.1">
    <property type="nucleotide sequence ID" value="NC_011742.1"/>
</dbReference>
<dbReference type="SMR" id="B7MAV8"/>
<dbReference type="KEGG" id="ecz:ECS88_1799"/>
<dbReference type="HOGENOM" id="CLU_057655_0_0_6"/>
<dbReference type="UniPathway" id="UPA00185">
    <property type="reaction ID" value="UER00279"/>
</dbReference>
<dbReference type="Proteomes" id="UP000000747">
    <property type="component" value="Chromosome"/>
</dbReference>
<dbReference type="GO" id="GO:0008791">
    <property type="term" value="F:arginine N-succinyltransferase activity"/>
    <property type="evidence" value="ECO:0007669"/>
    <property type="project" value="UniProtKB-UniRule"/>
</dbReference>
<dbReference type="GO" id="GO:0019544">
    <property type="term" value="P:arginine catabolic process to glutamate"/>
    <property type="evidence" value="ECO:0007669"/>
    <property type="project" value="UniProtKB-UniRule"/>
</dbReference>
<dbReference type="GO" id="GO:0019545">
    <property type="term" value="P:arginine catabolic process to succinate"/>
    <property type="evidence" value="ECO:0007669"/>
    <property type="project" value="UniProtKB-UniRule"/>
</dbReference>
<dbReference type="Gene3D" id="2.40.40.20">
    <property type="match status" value="1"/>
</dbReference>
<dbReference type="HAMAP" id="MF_01171">
    <property type="entry name" value="AstA"/>
    <property type="match status" value="1"/>
</dbReference>
<dbReference type="InterPro" id="IPR016181">
    <property type="entry name" value="Acyl_CoA_acyltransferase"/>
</dbReference>
<dbReference type="InterPro" id="IPR007041">
    <property type="entry name" value="Arg_succinylTrfase_AstA/AruG"/>
</dbReference>
<dbReference type="InterPro" id="IPR017650">
    <property type="entry name" value="Arginine_N-succinylTrfase"/>
</dbReference>
<dbReference type="NCBIfam" id="TIGR03243">
    <property type="entry name" value="arg_catab_AOST"/>
    <property type="match status" value="1"/>
</dbReference>
<dbReference type="NCBIfam" id="TIGR03244">
    <property type="entry name" value="arg_catab_AstA"/>
    <property type="match status" value="1"/>
</dbReference>
<dbReference type="NCBIfam" id="NF007770">
    <property type="entry name" value="PRK10456.1"/>
    <property type="match status" value="1"/>
</dbReference>
<dbReference type="PANTHER" id="PTHR30420:SF1">
    <property type="entry name" value="ARGININE N-SUCCINYLTRANSFERASE"/>
    <property type="match status" value="1"/>
</dbReference>
<dbReference type="PANTHER" id="PTHR30420">
    <property type="entry name" value="N-SUCCINYLARGININE DIHYDROLASE"/>
    <property type="match status" value="1"/>
</dbReference>
<dbReference type="Pfam" id="PF04958">
    <property type="entry name" value="AstA"/>
    <property type="match status" value="1"/>
</dbReference>
<dbReference type="SUPFAM" id="SSF55729">
    <property type="entry name" value="Acyl-CoA N-acyltransferases (Nat)"/>
    <property type="match status" value="1"/>
</dbReference>
<reference key="1">
    <citation type="journal article" date="2009" name="PLoS Genet.">
        <title>Organised genome dynamics in the Escherichia coli species results in highly diverse adaptive paths.</title>
        <authorList>
            <person name="Touchon M."/>
            <person name="Hoede C."/>
            <person name="Tenaillon O."/>
            <person name="Barbe V."/>
            <person name="Baeriswyl S."/>
            <person name="Bidet P."/>
            <person name="Bingen E."/>
            <person name="Bonacorsi S."/>
            <person name="Bouchier C."/>
            <person name="Bouvet O."/>
            <person name="Calteau A."/>
            <person name="Chiapello H."/>
            <person name="Clermont O."/>
            <person name="Cruveiller S."/>
            <person name="Danchin A."/>
            <person name="Diard M."/>
            <person name="Dossat C."/>
            <person name="Karoui M.E."/>
            <person name="Frapy E."/>
            <person name="Garry L."/>
            <person name="Ghigo J.M."/>
            <person name="Gilles A.M."/>
            <person name="Johnson J."/>
            <person name="Le Bouguenec C."/>
            <person name="Lescat M."/>
            <person name="Mangenot S."/>
            <person name="Martinez-Jehanne V."/>
            <person name="Matic I."/>
            <person name="Nassif X."/>
            <person name="Oztas S."/>
            <person name="Petit M.A."/>
            <person name="Pichon C."/>
            <person name="Rouy Z."/>
            <person name="Ruf C.S."/>
            <person name="Schneider D."/>
            <person name="Tourret J."/>
            <person name="Vacherie B."/>
            <person name="Vallenet D."/>
            <person name="Medigue C."/>
            <person name="Rocha E.P.C."/>
            <person name="Denamur E."/>
        </authorList>
    </citation>
    <scope>NUCLEOTIDE SEQUENCE [LARGE SCALE GENOMIC DNA]</scope>
    <source>
        <strain>S88 / ExPEC</strain>
    </source>
</reference>
<keyword id="KW-0012">Acyltransferase</keyword>
<keyword id="KW-0056">Arginine metabolism</keyword>
<keyword id="KW-1185">Reference proteome</keyword>
<keyword id="KW-0808">Transferase</keyword>